<evidence type="ECO:0000250" key="1"/>
<evidence type="ECO:0000255" key="2">
    <source>
        <dbReference type="HAMAP-Rule" id="MF_00223"/>
    </source>
</evidence>
<sequence>MSKPTREEAKEAVRTLLKFIGEDPSREGLLKTPDRVINSYAEIFSGYGKDVAKILNTKFYETCNFQDFILLNIKFTSFCEHHILPFNGTVDIAYVPDNCIVGISKLARIVNIFARRLQIQEKMTVQIAESVQENLKPLGVAVKISAVHSCMSMRGVMQDNSVMNTMHYTGIFAEQQKYRHEFLNLTAKR</sequence>
<comment type="catalytic activity">
    <reaction evidence="2">
        <text>GTP + H2O = 7,8-dihydroneopterin 3'-triphosphate + formate + H(+)</text>
        <dbReference type="Rhea" id="RHEA:17473"/>
        <dbReference type="ChEBI" id="CHEBI:15377"/>
        <dbReference type="ChEBI" id="CHEBI:15378"/>
        <dbReference type="ChEBI" id="CHEBI:15740"/>
        <dbReference type="ChEBI" id="CHEBI:37565"/>
        <dbReference type="ChEBI" id="CHEBI:58462"/>
        <dbReference type="EC" id="3.5.4.16"/>
    </reaction>
</comment>
<comment type="pathway">
    <text evidence="2">Cofactor biosynthesis; 7,8-dihydroneopterin triphosphate biosynthesis; 7,8-dihydroneopterin triphosphate from GTP: step 1/1.</text>
</comment>
<comment type="subunit">
    <text evidence="1">Toroid-shaped homodecamer, composed of two pentamers of five dimers.</text>
</comment>
<comment type="similarity">
    <text evidence="2">Belongs to the GTP cyclohydrolase I family.</text>
</comment>
<organism>
    <name type="scientific">Rickettsia massiliae (strain Mtu5)</name>
    <dbReference type="NCBI Taxonomy" id="416276"/>
    <lineage>
        <taxon>Bacteria</taxon>
        <taxon>Pseudomonadati</taxon>
        <taxon>Pseudomonadota</taxon>
        <taxon>Alphaproteobacteria</taxon>
        <taxon>Rickettsiales</taxon>
        <taxon>Rickettsiaceae</taxon>
        <taxon>Rickettsieae</taxon>
        <taxon>Rickettsia</taxon>
        <taxon>spotted fever group</taxon>
    </lineage>
</organism>
<keyword id="KW-0342">GTP-binding</keyword>
<keyword id="KW-0378">Hydrolase</keyword>
<keyword id="KW-0479">Metal-binding</keyword>
<keyword id="KW-0547">Nucleotide-binding</keyword>
<keyword id="KW-0554">One-carbon metabolism</keyword>
<keyword id="KW-0862">Zinc</keyword>
<feature type="chain" id="PRO_1000058676" description="GTP cyclohydrolase 1">
    <location>
        <begin position="1"/>
        <end position="189"/>
    </location>
</feature>
<feature type="binding site" evidence="2">
    <location>
        <position position="79"/>
    </location>
    <ligand>
        <name>Zn(2+)</name>
        <dbReference type="ChEBI" id="CHEBI:29105"/>
    </ligand>
</feature>
<feature type="binding site" evidence="2">
    <location>
        <position position="82"/>
    </location>
    <ligand>
        <name>Zn(2+)</name>
        <dbReference type="ChEBI" id="CHEBI:29105"/>
    </ligand>
</feature>
<feature type="binding site" evidence="2">
    <location>
        <position position="150"/>
    </location>
    <ligand>
        <name>Zn(2+)</name>
        <dbReference type="ChEBI" id="CHEBI:29105"/>
    </ligand>
</feature>
<gene>
    <name evidence="2" type="primary">folE</name>
    <name type="ordered locus">RMA_0545</name>
</gene>
<proteinExistence type="inferred from homology"/>
<dbReference type="EC" id="3.5.4.16" evidence="2"/>
<dbReference type="EMBL" id="CP000683">
    <property type="protein sequence ID" value="ABV84738.1"/>
    <property type="molecule type" value="Genomic_DNA"/>
</dbReference>
<dbReference type="RefSeq" id="WP_012152713.1">
    <property type="nucleotide sequence ID" value="NC_009900.1"/>
</dbReference>
<dbReference type="SMR" id="A8F1F2"/>
<dbReference type="KEGG" id="rms:RMA_0545"/>
<dbReference type="HOGENOM" id="CLU_049768_3_1_5"/>
<dbReference type="UniPathway" id="UPA00848">
    <property type="reaction ID" value="UER00151"/>
</dbReference>
<dbReference type="Proteomes" id="UP000001311">
    <property type="component" value="Chromosome"/>
</dbReference>
<dbReference type="GO" id="GO:0005737">
    <property type="term" value="C:cytoplasm"/>
    <property type="evidence" value="ECO:0007669"/>
    <property type="project" value="TreeGrafter"/>
</dbReference>
<dbReference type="GO" id="GO:0005525">
    <property type="term" value="F:GTP binding"/>
    <property type="evidence" value="ECO:0007669"/>
    <property type="project" value="UniProtKB-KW"/>
</dbReference>
<dbReference type="GO" id="GO:0003934">
    <property type="term" value="F:GTP cyclohydrolase I activity"/>
    <property type="evidence" value="ECO:0007669"/>
    <property type="project" value="UniProtKB-UniRule"/>
</dbReference>
<dbReference type="GO" id="GO:0008270">
    <property type="term" value="F:zinc ion binding"/>
    <property type="evidence" value="ECO:0007669"/>
    <property type="project" value="UniProtKB-UniRule"/>
</dbReference>
<dbReference type="GO" id="GO:0006730">
    <property type="term" value="P:one-carbon metabolic process"/>
    <property type="evidence" value="ECO:0007669"/>
    <property type="project" value="UniProtKB-UniRule"/>
</dbReference>
<dbReference type="GO" id="GO:0006729">
    <property type="term" value="P:tetrahydrobiopterin biosynthetic process"/>
    <property type="evidence" value="ECO:0007669"/>
    <property type="project" value="TreeGrafter"/>
</dbReference>
<dbReference type="GO" id="GO:0046654">
    <property type="term" value="P:tetrahydrofolate biosynthetic process"/>
    <property type="evidence" value="ECO:0007669"/>
    <property type="project" value="UniProtKB-UniRule"/>
</dbReference>
<dbReference type="FunFam" id="1.10.286.10:FF:000001">
    <property type="entry name" value="GTP cyclohydrolase 1"/>
    <property type="match status" value="1"/>
</dbReference>
<dbReference type="FunFam" id="3.30.1130.10:FF:000001">
    <property type="entry name" value="GTP cyclohydrolase 1"/>
    <property type="match status" value="1"/>
</dbReference>
<dbReference type="Gene3D" id="1.10.286.10">
    <property type="match status" value="1"/>
</dbReference>
<dbReference type="Gene3D" id="3.30.1130.10">
    <property type="match status" value="1"/>
</dbReference>
<dbReference type="HAMAP" id="MF_00223">
    <property type="entry name" value="FolE"/>
    <property type="match status" value="1"/>
</dbReference>
<dbReference type="InterPro" id="IPR043133">
    <property type="entry name" value="GTP-CH-I_C/QueF"/>
</dbReference>
<dbReference type="InterPro" id="IPR043134">
    <property type="entry name" value="GTP-CH-I_N"/>
</dbReference>
<dbReference type="InterPro" id="IPR001474">
    <property type="entry name" value="GTP_CycHdrlase_I"/>
</dbReference>
<dbReference type="InterPro" id="IPR018234">
    <property type="entry name" value="GTP_CycHdrlase_I_CS"/>
</dbReference>
<dbReference type="InterPro" id="IPR020602">
    <property type="entry name" value="GTP_CycHdrlase_I_dom"/>
</dbReference>
<dbReference type="NCBIfam" id="TIGR00063">
    <property type="entry name" value="folE"/>
    <property type="match status" value="1"/>
</dbReference>
<dbReference type="NCBIfam" id="NF006825">
    <property type="entry name" value="PRK09347.1-2"/>
    <property type="match status" value="1"/>
</dbReference>
<dbReference type="NCBIfam" id="NF006826">
    <property type="entry name" value="PRK09347.1-3"/>
    <property type="match status" value="1"/>
</dbReference>
<dbReference type="PANTHER" id="PTHR11109:SF7">
    <property type="entry name" value="GTP CYCLOHYDROLASE 1"/>
    <property type="match status" value="1"/>
</dbReference>
<dbReference type="PANTHER" id="PTHR11109">
    <property type="entry name" value="GTP CYCLOHYDROLASE I"/>
    <property type="match status" value="1"/>
</dbReference>
<dbReference type="Pfam" id="PF01227">
    <property type="entry name" value="GTP_cyclohydroI"/>
    <property type="match status" value="1"/>
</dbReference>
<dbReference type="SUPFAM" id="SSF55620">
    <property type="entry name" value="Tetrahydrobiopterin biosynthesis enzymes-like"/>
    <property type="match status" value="1"/>
</dbReference>
<dbReference type="PROSITE" id="PS00859">
    <property type="entry name" value="GTP_CYCLOHYDROL_1_1"/>
    <property type="match status" value="1"/>
</dbReference>
<dbReference type="PROSITE" id="PS00860">
    <property type="entry name" value="GTP_CYCLOHYDROL_1_2"/>
    <property type="match status" value="1"/>
</dbReference>
<reference key="1">
    <citation type="journal article" date="2007" name="Genome Res.">
        <title>Lateral gene transfer between obligate intracellular bacteria: evidence from the Rickettsia massiliae genome.</title>
        <authorList>
            <person name="Blanc G."/>
            <person name="Ogata H."/>
            <person name="Robert C."/>
            <person name="Audic S."/>
            <person name="Claverie J.-M."/>
            <person name="Raoult D."/>
        </authorList>
    </citation>
    <scope>NUCLEOTIDE SEQUENCE [LARGE SCALE GENOMIC DNA]</scope>
    <source>
        <strain>Mtu5</strain>
    </source>
</reference>
<accession>A8F1F2</accession>
<protein>
    <recommendedName>
        <fullName evidence="2">GTP cyclohydrolase 1</fullName>
        <ecNumber evidence="2">3.5.4.16</ecNumber>
    </recommendedName>
    <alternativeName>
        <fullName evidence="2">GTP cyclohydrolase I</fullName>
        <shortName evidence="2">GTP-CH-I</shortName>
    </alternativeName>
</protein>
<name>GCH1_RICM5</name>